<keyword id="KW-0002">3D-structure</keyword>
<keyword id="KW-0106">Calcium</keyword>
<keyword id="KW-0460">Magnesium</keyword>
<keyword id="KW-0479">Metal-binding</keyword>
<keyword id="KW-1185">Reference proteome</keyword>
<keyword id="KW-0786">Thiamine pyrophosphate</keyword>
<keyword id="KW-0808">Transferase</keyword>
<evidence type="ECO:0000250" key="1"/>
<evidence type="ECO:0000305" key="2"/>
<evidence type="ECO:0007829" key="3">
    <source>
        <dbReference type="PDB" id="5I5G"/>
    </source>
</evidence>
<evidence type="ECO:0007829" key="4">
    <source>
        <dbReference type="PDB" id="5XUF"/>
    </source>
</evidence>
<evidence type="ECO:0007829" key="5">
    <source>
        <dbReference type="PDB" id="5XVT"/>
    </source>
</evidence>
<feature type="chain" id="PRO_0000191902" description="Transketolase">
    <location>
        <begin position="1"/>
        <end position="677"/>
    </location>
</feature>
<feature type="active site" description="Proton donor" evidence="1">
    <location>
        <position position="415"/>
    </location>
</feature>
<feature type="binding site" evidence="1">
    <location>
        <position position="27"/>
    </location>
    <ligand>
        <name>substrate</name>
    </ligand>
</feature>
<feature type="binding site" evidence="1">
    <location>
        <position position="66"/>
    </location>
    <ligand>
        <name>thiamine diphosphate</name>
        <dbReference type="ChEBI" id="CHEBI:58937"/>
    </ligand>
</feature>
<feature type="binding site" evidence="1">
    <location>
        <begin position="114"/>
        <end position="116"/>
    </location>
    <ligand>
        <name>thiamine diphosphate</name>
        <dbReference type="ChEBI" id="CHEBI:58937"/>
    </ligand>
</feature>
<feature type="binding site" evidence="1">
    <location>
        <position position="155"/>
    </location>
    <ligand>
        <name>Mg(2+)</name>
        <dbReference type="ChEBI" id="CHEBI:18420"/>
    </ligand>
</feature>
<feature type="binding site" evidence="1">
    <location>
        <position position="156"/>
    </location>
    <ligand>
        <name>thiamine diphosphate</name>
        <dbReference type="ChEBI" id="CHEBI:58937"/>
    </ligand>
</feature>
<feature type="binding site" evidence="1">
    <location>
        <position position="185"/>
    </location>
    <ligand>
        <name>Mg(2+)</name>
        <dbReference type="ChEBI" id="CHEBI:18420"/>
    </ligand>
</feature>
<feature type="binding site" evidence="1">
    <location>
        <position position="185"/>
    </location>
    <ligand>
        <name>thiamine diphosphate</name>
        <dbReference type="ChEBI" id="CHEBI:58937"/>
    </ligand>
</feature>
<feature type="binding site" evidence="1">
    <location>
        <position position="187"/>
    </location>
    <ligand>
        <name>Mg(2+)</name>
        <dbReference type="ChEBI" id="CHEBI:18420"/>
    </ligand>
</feature>
<feature type="binding site" evidence="1">
    <location>
        <position position="261"/>
    </location>
    <ligand>
        <name>substrate</name>
    </ligand>
</feature>
<feature type="binding site" evidence="1">
    <location>
        <position position="261"/>
    </location>
    <ligand>
        <name>thiamine diphosphate</name>
        <dbReference type="ChEBI" id="CHEBI:58937"/>
    </ligand>
</feature>
<feature type="binding site" evidence="1">
    <location>
        <position position="356"/>
    </location>
    <ligand>
        <name>substrate</name>
    </ligand>
</feature>
<feature type="binding site" evidence="1">
    <location>
        <position position="383"/>
    </location>
    <ligand>
        <name>substrate</name>
    </ligand>
</feature>
<feature type="binding site" evidence="1">
    <location>
        <position position="415"/>
    </location>
    <ligand>
        <name>thiamine diphosphate</name>
        <dbReference type="ChEBI" id="CHEBI:58937"/>
    </ligand>
</feature>
<feature type="binding site" evidence="1">
    <location>
        <position position="442"/>
    </location>
    <ligand>
        <name>thiamine diphosphate</name>
        <dbReference type="ChEBI" id="CHEBI:58937"/>
    </ligand>
</feature>
<feature type="binding site" evidence="1">
    <location>
        <position position="466"/>
    </location>
    <ligand>
        <name>substrate</name>
    </ligand>
</feature>
<feature type="binding site" evidence="1">
    <location>
        <position position="474"/>
    </location>
    <ligand>
        <name>substrate</name>
    </ligand>
</feature>
<feature type="binding site" evidence="1">
    <location>
        <position position="525"/>
    </location>
    <ligand>
        <name>substrate</name>
    </ligand>
</feature>
<feature type="site" description="Important for catalytic activity" evidence="1">
    <location>
        <position position="27"/>
    </location>
</feature>
<feature type="site" description="Important for catalytic activity" evidence="1">
    <location>
        <position position="261"/>
    </location>
</feature>
<feature type="sequence conflict" description="In Ref. 1; CAA81260." evidence="2" ref="1">
    <original>AVDA</original>
    <variation>SSMT</variation>
    <location>
        <begin position="566"/>
        <end position="569"/>
    </location>
</feature>
<feature type="helix" evidence="5">
    <location>
        <begin position="4"/>
        <end position="23"/>
    </location>
</feature>
<feature type="helix" evidence="5">
    <location>
        <begin position="29"/>
        <end position="44"/>
    </location>
</feature>
<feature type="strand" evidence="5">
    <location>
        <begin position="59"/>
        <end position="64"/>
    </location>
</feature>
<feature type="helix" evidence="5">
    <location>
        <begin position="65"/>
        <end position="67"/>
    </location>
</feature>
<feature type="helix" evidence="5">
    <location>
        <begin position="68"/>
        <end position="77"/>
    </location>
</feature>
<feature type="helix" evidence="5">
    <location>
        <begin position="84"/>
        <end position="88"/>
    </location>
</feature>
<feature type="turn" evidence="5">
    <location>
        <begin position="89"/>
        <end position="91"/>
    </location>
</feature>
<feature type="turn" evidence="5">
    <location>
        <begin position="103"/>
        <end position="105"/>
    </location>
</feature>
<feature type="helix" evidence="5">
    <location>
        <begin position="118"/>
        <end position="137"/>
    </location>
</feature>
<feature type="strand" evidence="5">
    <location>
        <begin position="149"/>
        <end position="153"/>
    </location>
</feature>
<feature type="helix" evidence="5">
    <location>
        <begin position="155"/>
        <end position="159"/>
    </location>
</feature>
<feature type="helix" evidence="5">
    <location>
        <begin position="161"/>
        <end position="172"/>
    </location>
</feature>
<feature type="strand" evidence="5">
    <location>
        <begin position="178"/>
        <end position="184"/>
    </location>
</feature>
<feature type="strand" evidence="4">
    <location>
        <begin position="186"/>
        <end position="188"/>
    </location>
</feature>
<feature type="helix" evidence="5">
    <location>
        <begin position="193"/>
        <end position="195"/>
    </location>
</feature>
<feature type="helix" evidence="5">
    <location>
        <begin position="201"/>
        <end position="207"/>
    </location>
</feature>
<feature type="strand" evidence="5">
    <location>
        <begin position="211"/>
        <end position="215"/>
    </location>
</feature>
<feature type="turn" evidence="5">
    <location>
        <begin position="216"/>
        <end position="220"/>
    </location>
</feature>
<feature type="helix" evidence="5">
    <location>
        <begin position="222"/>
        <end position="234"/>
    </location>
</feature>
<feature type="strand" evidence="5">
    <location>
        <begin position="240"/>
        <end position="245"/>
    </location>
</feature>
<feature type="turn" evidence="5">
    <location>
        <begin position="248"/>
        <end position="251"/>
    </location>
</feature>
<feature type="turn" evidence="5">
    <location>
        <begin position="253"/>
        <end position="256"/>
    </location>
</feature>
<feature type="helix" evidence="5">
    <location>
        <begin position="258"/>
        <end position="260"/>
    </location>
</feature>
<feature type="strand" evidence="3">
    <location>
        <begin position="261"/>
        <end position="263"/>
    </location>
</feature>
<feature type="helix" evidence="5">
    <location>
        <begin position="267"/>
        <end position="276"/>
    </location>
</feature>
<feature type="helix" evidence="5">
    <location>
        <begin position="289"/>
        <end position="319"/>
    </location>
</feature>
<feature type="helix" evidence="5">
    <location>
        <begin position="321"/>
        <end position="331"/>
    </location>
</feature>
<feature type="helix" evidence="5">
    <location>
        <begin position="339"/>
        <end position="342"/>
    </location>
</feature>
<feature type="helix" evidence="5">
    <location>
        <begin position="355"/>
        <end position="366"/>
    </location>
</feature>
<feature type="helix" evidence="5">
    <location>
        <begin position="367"/>
        <end position="369"/>
    </location>
</feature>
<feature type="strand" evidence="5">
    <location>
        <begin position="373"/>
        <end position="379"/>
    </location>
</feature>
<feature type="helix" evidence="5">
    <location>
        <begin position="381"/>
        <end position="384"/>
    </location>
</feature>
<feature type="helix" evidence="5">
    <location>
        <begin position="397"/>
        <end position="399"/>
    </location>
</feature>
<feature type="strand" evidence="5">
    <location>
        <begin position="408"/>
        <end position="410"/>
    </location>
</feature>
<feature type="helix" evidence="5">
    <location>
        <begin position="415"/>
        <end position="428"/>
    </location>
</feature>
<feature type="strand" evidence="5">
    <location>
        <begin position="433"/>
        <end position="439"/>
    </location>
</feature>
<feature type="helix" evidence="5">
    <location>
        <begin position="440"/>
        <end position="443"/>
    </location>
</feature>
<feature type="helix" evidence="5">
    <location>
        <begin position="444"/>
        <end position="446"/>
    </location>
</feature>
<feature type="helix" evidence="5">
    <location>
        <begin position="447"/>
        <end position="456"/>
    </location>
</feature>
<feature type="strand" evidence="5">
    <location>
        <begin position="460"/>
        <end position="466"/>
    </location>
</feature>
<feature type="helix" evidence="5">
    <location>
        <begin position="469"/>
        <end position="471"/>
    </location>
</feature>
<feature type="turn" evidence="5">
    <location>
        <begin position="476"/>
        <end position="478"/>
    </location>
</feature>
<feature type="helix" evidence="5">
    <location>
        <begin position="483"/>
        <end position="488"/>
    </location>
</feature>
<feature type="strand" evidence="5">
    <location>
        <begin position="494"/>
        <end position="496"/>
    </location>
</feature>
<feature type="helix" evidence="5">
    <location>
        <begin position="501"/>
        <end position="513"/>
    </location>
</feature>
<feature type="strand" evidence="5">
    <location>
        <begin position="519"/>
        <end position="522"/>
    </location>
</feature>
<feature type="strand" evidence="5">
    <location>
        <begin position="525"/>
        <end position="528"/>
    </location>
</feature>
<feature type="helix" evidence="5">
    <location>
        <begin position="536"/>
        <end position="539"/>
    </location>
</feature>
<feature type="strand" evidence="5">
    <location>
        <begin position="542"/>
        <end position="547"/>
    </location>
</feature>
<feature type="strand" evidence="5">
    <location>
        <begin position="553"/>
        <end position="558"/>
    </location>
</feature>
<feature type="helix" evidence="5">
    <location>
        <begin position="562"/>
        <end position="575"/>
    </location>
</feature>
<feature type="strand" evidence="5">
    <location>
        <begin position="580"/>
        <end position="584"/>
    </location>
</feature>
<feature type="helix" evidence="5">
    <location>
        <begin position="588"/>
        <end position="592"/>
    </location>
</feature>
<feature type="helix" evidence="5">
    <location>
        <begin position="596"/>
        <end position="602"/>
    </location>
</feature>
<feature type="strand" evidence="5">
    <location>
        <begin position="605"/>
        <end position="607"/>
    </location>
</feature>
<feature type="strand" evidence="5">
    <location>
        <begin position="609"/>
        <end position="612"/>
    </location>
</feature>
<feature type="helix" evidence="5">
    <location>
        <begin position="620"/>
        <end position="622"/>
    </location>
</feature>
<feature type="strand" evidence="5">
    <location>
        <begin position="625"/>
        <end position="628"/>
    </location>
</feature>
<feature type="helix" evidence="5">
    <location>
        <begin position="639"/>
        <end position="645"/>
    </location>
</feature>
<feature type="helix" evidence="5">
    <location>
        <begin position="650"/>
        <end position="664"/>
    </location>
</feature>
<gene>
    <name type="primary">TKT</name>
    <name type="synonym">TKT1</name>
    <name type="ORF">PICST_67105</name>
</gene>
<organism>
    <name type="scientific">Scheffersomyces stipitis (strain ATCC 58785 / CBS 6054 / NBRC 10063 / NRRL Y-11545)</name>
    <name type="common">Yeast</name>
    <name type="synonym">Pichia stipitis</name>
    <dbReference type="NCBI Taxonomy" id="322104"/>
    <lineage>
        <taxon>Eukaryota</taxon>
        <taxon>Fungi</taxon>
        <taxon>Dikarya</taxon>
        <taxon>Ascomycota</taxon>
        <taxon>Saccharomycotina</taxon>
        <taxon>Pichiomycetes</taxon>
        <taxon>Debaryomycetaceae</taxon>
        <taxon>Scheffersomyces</taxon>
    </lineage>
</organism>
<proteinExistence type="evidence at protein level"/>
<dbReference type="EC" id="2.2.1.1"/>
<dbReference type="EMBL" id="Z26486">
    <property type="protein sequence ID" value="CAA81260.2"/>
    <property type="status" value="ALT_FRAME"/>
    <property type="molecule type" value="Genomic_DNA"/>
</dbReference>
<dbReference type="EMBL" id="CP000496">
    <property type="protein sequence ID" value="ABN64656.1"/>
    <property type="molecule type" value="Genomic_DNA"/>
</dbReference>
<dbReference type="PIR" id="S37439">
    <property type="entry name" value="S37439"/>
</dbReference>
<dbReference type="RefSeq" id="XP_001382685.1">
    <property type="nucleotide sequence ID" value="XM_001382648.1"/>
</dbReference>
<dbReference type="PDB" id="5HGX">
    <property type="method" value="X-ray"/>
    <property type="resolution" value="1.09 A"/>
    <property type="chains" value="A=1-677"/>
</dbReference>
<dbReference type="PDB" id="5HJE">
    <property type="method" value="X-ray"/>
    <property type="resolution" value="1.40 A"/>
    <property type="chains" value="A=1-677"/>
</dbReference>
<dbReference type="PDB" id="5HYV">
    <property type="method" value="X-ray"/>
    <property type="resolution" value="1.03 A"/>
    <property type="chains" value="A=1-677"/>
</dbReference>
<dbReference type="PDB" id="5I4I">
    <property type="method" value="X-ray"/>
    <property type="resolution" value="1.06 A"/>
    <property type="chains" value="A=1-677"/>
</dbReference>
<dbReference type="PDB" id="5I51">
    <property type="method" value="X-ray"/>
    <property type="resolution" value="1.54 A"/>
    <property type="chains" value="A=1-677"/>
</dbReference>
<dbReference type="PDB" id="5I5E">
    <property type="method" value="X-ray"/>
    <property type="resolution" value="1.62 A"/>
    <property type="chains" value="A=1-677"/>
</dbReference>
<dbReference type="PDB" id="5I5G">
    <property type="method" value="X-ray"/>
    <property type="resolution" value="1.95 A"/>
    <property type="chains" value="A=1-677"/>
</dbReference>
<dbReference type="PDB" id="5XPS">
    <property type="method" value="X-ray"/>
    <property type="resolution" value="1.07 A"/>
    <property type="chains" value="A=1-677"/>
</dbReference>
<dbReference type="PDB" id="5XQA">
    <property type="method" value="X-ray"/>
    <property type="resolution" value="1.14 A"/>
    <property type="chains" value="A=1-677"/>
</dbReference>
<dbReference type="PDB" id="5XQK">
    <property type="method" value="X-ray"/>
    <property type="resolution" value="1.12 A"/>
    <property type="chains" value="A=1-677"/>
</dbReference>
<dbReference type="PDB" id="5XRV">
    <property type="method" value="X-ray"/>
    <property type="resolution" value="1.40 A"/>
    <property type="chains" value="A=1-677"/>
</dbReference>
<dbReference type="PDB" id="5XRY">
    <property type="method" value="X-ray"/>
    <property type="resolution" value="1.30 A"/>
    <property type="chains" value="A=1-677"/>
</dbReference>
<dbReference type="PDB" id="5XS6">
    <property type="method" value="X-ray"/>
    <property type="resolution" value="0.97 A"/>
    <property type="chains" value="A=1-677"/>
</dbReference>
<dbReference type="PDB" id="5XSA">
    <property type="method" value="X-ray"/>
    <property type="resolution" value="0.97 A"/>
    <property type="chains" value="A=1-677"/>
</dbReference>
<dbReference type="PDB" id="5XSB">
    <property type="method" value="X-ray"/>
    <property type="resolution" value="0.92 A"/>
    <property type="chains" value="A=1-677"/>
</dbReference>
<dbReference type="PDB" id="5XSM">
    <property type="method" value="X-ray"/>
    <property type="resolution" value="0.97 A"/>
    <property type="chains" value="A=1-677"/>
</dbReference>
<dbReference type="PDB" id="5XT0">
    <property type="method" value="X-ray"/>
    <property type="resolution" value="1.15 A"/>
    <property type="chains" value="A=1-677"/>
</dbReference>
<dbReference type="PDB" id="5XT4">
    <property type="method" value="X-ray"/>
    <property type="resolution" value="1.06 A"/>
    <property type="chains" value="A=1-677"/>
</dbReference>
<dbReference type="PDB" id="5XTL">
    <property type="method" value="X-ray"/>
    <property type="resolution" value="1.10 A"/>
    <property type="chains" value="A=1-677"/>
</dbReference>
<dbReference type="PDB" id="5XTV">
    <property type="method" value="X-ray"/>
    <property type="resolution" value="0.93 A"/>
    <property type="chains" value="A=1-677"/>
</dbReference>
<dbReference type="PDB" id="5XTX">
    <property type="method" value="X-ray"/>
    <property type="resolution" value="1.05 A"/>
    <property type="chains" value="A=1-677"/>
</dbReference>
<dbReference type="PDB" id="5XU2">
    <property type="method" value="X-ray"/>
    <property type="resolution" value="0.97 A"/>
    <property type="chains" value="A=1-677"/>
</dbReference>
<dbReference type="PDB" id="5XU9">
    <property type="method" value="X-ray"/>
    <property type="resolution" value="1.17 A"/>
    <property type="chains" value="A=1-677"/>
</dbReference>
<dbReference type="PDB" id="5XUF">
    <property type="method" value="X-ray"/>
    <property type="resolution" value="0.88 A"/>
    <property type="chains" value="A=1-677"/>
</dbReference>
<dbReference type="PDB" id="5XVT">
    <property type="method" value="X-ray"/>
    <property type="resolution" value="0.85 A"/>
    <property type="chains" value="A=1-677"/>
</dbReference>
<dbReference type="PDBsum" id="5HGX"/>
<dbReference type="PDBsum" id="5HJE"/>
<dbReference type="PDBsum" id="5HYV"/>
<dbReference type="PDBsum" id="5I4I"/>
<dbReference type="PDBsum" id="5I51"/>
<dbReference type="PDBsum" id="5I5E"/>
<dbReference type="PDBsum" id="5I5G"/>
<dbReference type="PDBsum" id="5XPS"/>
<dbReference type="PDBsum" id="5XQA"/>
<dbReference type="PDBsum" id="5XQK"/>
<dbReference type="PDBsum" id="5XRV"/>
<dbReference type="PDBsum" id="5XRY"/>
<dbReference type="PDBsum" id="5XS6"/>
<dbReference type="PDBsum" id="5XSA"/>
<dbReference type="PDBsum" id="5XSB"/>
<dbReference type="PDBsum" id="5XSM"/>
<dbReference type="PDBsum" id="5XT0"/>
<dbReference type="PDBsum" id="5XT4"/>
<dbReference type="PDBsum" id="5XTL"/>
<dbReference type="PDBsum" id="5XTV"/>
<dbReference type="PDBsum" id="5XTX"/>
<dbReference type="PDBsum" id="5XU2"/>
<dbReference type="PDBsum" id="5XU9"/>
<dbReference type="PDBsum" id="5XUF"/>
<dbReference type="PDBsum" id="5XVT"/>
<dbReference type="SMR" id="P34736"/>
<dbReference type="FunCoup" id="P34736">
    <property type="interactions" value="816"/>
</dbReference>
<dbReference type="STRING" id="322104.P34736"/>
<dbReference type="GeneID" id="4837370"/>
<dbReference type="KEGG" id="pic:PICST_67105"/>
<dbReference type="eggNOG" id="KOG0523">
    <property type="taxonomic scope" value="Eukaryota"/>
</dbReference>
<dbReference type="HOGENOM" id="CLU_009227_0_0_1"/>
<dbReference type="InParanoid" id="P34736"/>
<dbReference type="OMA" id="ADYMRGS"/>
<dbReference type="OrthoDB" id="10267175at2759"/>
<dbReference type="BRENDA" id="2.2.1.1">
    <property type="organism ID" value="4832"/>
</dbReference>
<dbReference type="Proteomes" id="UP000002258">
    <property type="component" value="Chromosome 2"/>
</dbReference>
<dbReference type="GO" id="GO:0005829">
    <property type="term" value="C:cytosol"/>
    <property type="evidence" value="ECO:0007669"/>
    <property type="project" value="TreeGrafter"/>
</dbReference>
<dbReference type="GO" id="GO:0005634">
    <property type="term" value="C:nucleus"/>
    <property type="evidence" value="ECO:0007669"/>
    <property type="project" value="TreeGrafter"/>
</dbReference>
<dbReference type="GO" id="GO:0046872">
    <property type="term" value="F:metal ion binding"/>
    <property type="evidence" value="ECO:0007669"/>
    <property type="project" value="UniProtKB-KW"/>
</dbReference>
<dbReference type="GO" id="GO:0004802">
    <property type="term" value="F:transketolase activity"/>
    <property type="evidence" value="ECO:0007669"/>
    <property type="project" value="UniProtKB-EC"/>
</dbReference>
<dbReference type="GO" id="GO:0006098">
    <property type="term" value="P:pentose-phosphate shunt"/>
    <property type="evidence" value="ECO:0007669"/>
    <property type="project" value="TreeGrafter"/>
</dbReference>
<dbReference type="CDD" id="cd07033">
    <property type="entry name" value="TPP_PYR_DXS_TK_like"/>
    <property type="match status" value="1"/>
</dbReference>
<dbReference type="CDD" id="cd02012">
    <property type="entry name" value="TPP_TK"/>
    <property type="match status" value="1"/>
</dbReference>
<dbReference type="FunFam" id="3.40.50.920:FF:000003">
    <property type="entry name" value="Transketolase"/>
    <property type="match status" value="1"/>
</dbReference>
<dbReference type="FunFam" id="3.40.50.970:FF:000003">
    <property type="entry name" value="Transketolase"/>
    <property type="match status" value="1"/>
</dbReference>
<dbReference type="FunFam" id="3.40.50.970:FF:000004">
    <property type="entry name" value="Transketolase"/>
    <property type="match status" value="1"/>
</dbReference>
<dbReference type="Gene3D" id="3.40.50.920">
    <property type="match status" value="1"/>
</dbReference>
<dbReference type="Gene3D" id="3.40.50.970">
    <property type="match status" value="2"/>
</dbReference>
<dbReference type="InterPro" id="IPR029061">
    <property type="entry name" value="THDP-binding"/>
</dbReference>
<dbReference type="InterPro" id="IPR009014">
    <property type="entry name" value="Transketo_C/PFOR_II"/>
</dbReference>
<dbReference type="InterPro" id="IPR055152">
    <property type="entry name" value="Transketolase-like_C_2"/>
</dbReference>
<dbReference type="InterPro" id="IPR005475">
    <property type="entry name" value="Transketolase-like_Pyr-bd"/>
</dbReference>
<dbReference type="InterPro" id="IPR005478">
    <property type="entry name" value="Transketolase_bac-like"/>
</dbReference>
<dbReference type="InterPro" id="IPR020826">
    <property type="entry name" value="Transketolase_BS"/>
</dbReference>
<dbReference type="InterPro" id="IPR049557">
    <property type="entry name" value="Transketolase_CS"/>
</dbReference>
<dbReference type="InterPro" id="IPR033247">
    <property type="entry name" value="Transketolase_fam"/>
</dbReference>
<dbReference type="InterPro" id="IPR005474">
    <property type="entry name" value="Transketolase_N"/>
</dbReference>
<dbReference type="NCBIfam" id="TIGR00232">
    <property type="entry name" value="tktlase_bact"/>
    <property type="match status" value="1"/>
</dbReference>
<dbReference type="PANTHER" id="PTHR43522">
    <property type="entry name" value="TRANSKETOLASE"/>
    <property type="match status" value="1"/>
</dbReference>
<dbReference type="PANTHER" id="PTHR43522:SF2">
    <property type="entry name" value="TRANSKETOLASE 1-RELATED"/>
    <property type="match status" value="1"/>
</dbReference>
<dbReference type="Pfam" id="PF02779">
    <property type="entry name" value="Transket_pyr"/>
    <property type="match status" value="1"/>
</dbReference>
<dbReference type="Pfam" id="PF22613">
    <property type="entry name" value="Transketolase_C_1"/>
    <property type="match status" value="1"/>
</dbReference>
<dbReference type="Pfam" id="PF00456">
    <property type="entry name" value="Transketolase_N"/>
    <property type="match status" value="1"/>
</dbReference>
<dbReference type="SMART" id="SM00861">
    <property type="entry name" value="Transket_pyr"/>
    <property type="match status" value="1"/>
</dbReference>
<dbReference type="SUPFAM" id="SSF52518">
    <property type="entry name" value="Thiamin diphosphate-binding fold (THDP-binding)"/>
    <property type="match status" value="2"/>
</dbReference>
<dbReference type="SUPFAM" id="SSF52922">
    <property type="entry name" value="TK C-terminal domain-like"/>
    <property type="match status" value="1"/>
</dbReference>
<dbReference type="PROSITE" id="PS00801">
    <property type="entry name" value="TRANSKETOLASE_1"/>
    <property type="match status" value="1"/>
</dbReference>
<dbReference type="PROSITE" id="PS00802">
    <property type="entry name" value="TRANSKETOLASE_2"/>
    <property type="match status" value="1"/>
</dbReference>
<sequence length="677" mass="72805">MSSVDQKAISTIRLLAVDAVAAANSGHPGAPLGLAPAAHAVFKKMRFNPKDTKWINRDRFVLSNGHACALLYSMLVLYGYDLTVEDLKKFRQLGSKTPGHPENTDVPGAEVTTGPLGQGICNGVGIALAQAQFAATYNKPDFPISDSYTYVFLGDGCLMEGVSSEASSLAGHLQLGNLIAFWDDNKISIDGSTEVAFTEDVIARYKSYGWHIVEVSDADTDITAIAAAIDEAKKVTNKPTLVRLTTTIGFGSLAQGTHGVHGAPLKADDIKQLKTKWGFNPEESFAVPAEVTASYNEHVAENQKIQQQWNELFAAYKQKYPELGAELQRRLDGKLPENWDKALPVYTPADAAVATRKLSEIVLSKIIPEVPEIIGGSADLTPSNLTKAKGTVDFQPAATGLGDYSGRYIRYGVREHAMGAIMNGIAAFGANYKNYGGTFLNFVSYAAGAVRLSALSEFPITWVATHDSIGLGEDGPTHQPIETLAHFRATPNISVWRPADGNETSAAYKSAIESTHTPHILALTRQNLPQLEGSSIEKASKGGYTLVQQDKADIIIVATGSEVSLAVDALKVLEGQGIKAGVVSLPDQLTFDKQSEEYKLSVLPDGVPILSVEVMSTFGWSKYSHQQFGLNRFGASGKAPEIFKLFEFTPEGVAERAAKTVAFYKGKDVVSPLRSAF</sequence>
<protein>
    <recommendedName>
        <fullName>Transketolase</fullName>
        <shortName>TK</shortName>
        <ecNumber>2.2.1.1</ecNumber>
    </recommendedName>
</protein>
<name>TKT_PICST</name>
<comment type="function">
    <text evidence="1">Catalyzes the transfer of a two-carbon ketol group from a ketose donor to an aldose acceptor, via a covalent intermediate with the cofactor thiamine pyrophosphate.</text>
</comment>
<comment type="catalytic activity">
    <reaction>
        <text>D-sedoheptulose 7-phosphate + D-glyceraldehyde 3-phosphate = aldehydo-D-ribose 5-phosphate + D-xylulose 5-phosphate</text>
        <dbReference type="Rhea" id="RHEA:10508"/>
        <dbReference type="ChEBI" id="CHEBI:57483"/>
        <dbReference type="ChEBI" id="CHEBI:57737"/>
        <dbReference type="ChEBI" id="CHEBI:58273"/>
        <dbReference type="ChEBI" id="CHEBI:59776"/>
        <dbReference type="EC" id="2.2.1.1"/>
    </reaction>
</comment>
<comment type="cofactor">
    <cofactor evidence="1">
        <name>Mg(2+)</name>
        <dbReference type="ChEBI" id="CHEBI:18420"/>
    </cofactor>
    <cofactor evidence="1">
        <name>Ca(2+)</name>
        <dbReference type="ChEBI" id="CHEBI:29108"/>
    </cofactor>
    <cofactor evidence="1">
        <name>Mn(2+)</name>
        <dbReference type="ChEBI" id="CHEBI:29035"/>
    </cofactor>
    <cofactor evidence="1">
        <name>Co(2+)</name>
        <dbReference type="ChEBI" id="CHEBI:48828"/>
    </cofactor>
    <text evidence="1">Binds 1 Mg(2+) ion per subunit. Can also utilize other divalent metal cations, such as Ca(2+), Mn(2+) and Co(2+).</text>
</comment>
<comment type="cofactor">
    <cofactor evidence="1">
        <name>thiamine diphosphate</name>
        <dbReference type="ChEBI" id="CHEBI:58937"/>
    </cofactor>
    <text evidence="1">Binds 1 thiamine pyrophosphate per subunit.</text>
</comment>
<comment type="subunit">
    <text evidence="1">Homodimer.</text>
</comment>
<comment type="similarity">
    <text evidence="2">Belongs to the transketolase family.</text>
</comment>
<comment type="sequence caution" evidence="2">
    <conflict type="frameshift">
        <sequence resource="EMBL-CDS" id="CAA81260"/>
    </conflict>
</comment>
<reference key="1">
    <citation type="journal article" date="1994" name="Appl. Microbiol. Biotechnol.">
        <title>Isolation and characterization of the Pichia stipitis transketolase gene and expression in a xylose-utilising Saccharomyces cerevisiae transformant.</title>
        <authorList>
            <person name="Metzger M."/>
            <person name="Hollenberg C."/>
        </authorList>
    </citation>
    <scope>NUCLEOTIDE SEQUENCE [GENOMIC DNA]</scope>
</reference>
<reference key="2">
    <citation type="journal article" date="2007" name="Nat. Biotechnol.">
        <title>Genome sequence of the lignocellulose-bioconverting and xylose-fermenting yeast Pichia stipitis.</title>
        <authorList>
            <person name="Jeffries T.W."/>
            <person name="Grigoriev I.V."/>
            <person name="Grimwood J."/>
            <person name="Laplaza J.M."/>
            <person name="Aerts A."/>
            <person name="Salamov A."/>
            <person name="Schmutz J."/>
            <person name="Lindquist E."/>
            <person name="Dehal P."/>
            <person name="Shapiro H."/>
            <person name="Jin Y.-S."/>
            <person name="Passoth V."/>
            <person name="Richardson P.M."/>
        </authorList>
    </citation>
    <scope>NUCLEOTIDE SEQUENCE [LARGE SCALE GENOMIC DNA]</scope>
    <source>
        <strain>ATCC 58785 / CBS 6054 / NBRC 10063 / NRRL Y-11545</strain>
    </source>
</reference>
<accession>P34736</accession>
<accession>A3LQC1</accession>